<reference key="1">
    <citation type="submission" date="2007-05" db="EMBL/GenBank/DDBJ databases">
        <title>Complete sequence of Thermotoga petrophila RKU-1.</title>
        <authorList>
            <consortium name="US DOE Joint Genome Institute"/>
            <person name="Copeland A."/>
            <person name="Lucas S."/>
            <person name="Lapidus A."/>
            <person name="Barry K."/>
            <person name="Glavina del Rio T."/>
            <person name="Dalin E."/>
            <person name="Tice H."/>
            <person name="Pitluck S."/>
            <person name="Sims D."/>
            <person name="Brettin T."/>
            <person name="Bruce D."/>
            <person name="Detter J.C."/>
            <person name="Han C."/>
            <person name="Tapia R."/>
            <person name="Schmutz J."/>
            <person name="Larimer F."/>
            <person name="Land M."/>
            <person name="Hauser L."/>
            <person name="Kyrpides N."/>
            <person name="Mikhailova N."/>
            <person name="Nelson K."/>
            <person name="Gogarten J.P."/>
            <person name="Noll K."/>
            <person name="Richardson P."/>
        </authorList>
    </citation>
    <scope>NUCLEOTIDE SEQUENCE [LARGE SCALE GENOMIC DNA]</scope>
    <source>
        <strain>ATCC BAA-488 / DSM 13995 / JCM 10881 / RKU-1</strain>
    </source>
</reference>
<keyword id="KW-0963">Cytoplasm</keyword>
<keyword id="KW-0396">Initiation factor</keyword>
<keyword id="KW-0648">Protein biosynthesis</keyword>
<keyword id="KW-0694">RNA-binding</keyword>
<keyword id="KW-0699">rRNA-binding</keyword>
<evidence type="ECO:0000255" key="1">
    <source>
        <dbReference type="HAMAP-Rule" id="MF_00075"/>
    </source>
</evidence>
<gene>
    <name evidence="1" type="primary">infA</name>
    <name type="ordered locus">Tpet_1315</name>
</gene>
<feature type="chain" id="PRO_0000338945" description="Translation initiation factor IF-1">
    <location>
        <begin position="1"/>
        <end position="74"/>
    </location>
</feature>
<feature type="domain" description="S1-like" evidence="1">
    <location>
        <begin position="1"/>
        <end position="72"/>
    </location>
</feature>
<protein>
    <recommendedName>
        <fullName evidence="1">Translation initiation factor IF-1</fullName>
    </recommendedName>
</protein>
<sequence>MGKEDVIRMEGTIIEALPNAMFRVELDNGHKVLAHVSGRMRKNFIRLVPGDRVIVELSVYDLTRGRIVYRKKPE</sequence>
<accession>A5IMA6</accession>
<name>IF1_THEP1</name>
<organism>
    <name type="scientific">Thermotoga petrophila (strain ATCC BAA-488 / DSM 13995 / JCM 10881 / RKU-1)</name>
    <dbReference type="NCBI Taxonomy" id="390874"/>
    <lineage>
        <taxon>Bacteria</taxon>
        <taxon>Thermotogati</taxon>
        <taxon>Thermotogota</taxon>
        <taxon>Thermotogae</taxon>
        <taxon>Thermotogales</taxon>
        <taxon>Thermotogaceae</taxon>
        <taxon>Thermotoga</taxon>
    </lineage>
</organism>
<proteinExistence type="inferred from homology"/>
<dbReference type="EMBL" id="CP000702">
    <property type="protein sequence ID" value="ABQ47329.1"/>
    <property type="molecule type" value="Genomic_DNA"/>
</dbReference>
<dbReference type="RefSeq" id="WP_004081789.1">
    <property type="nucleotide sequence ID" value="NC_009486.1"/>
</dbReference>
<dbReference type="SMR" id="A5IMA6"/>
<dbReference type="STRING" id="390874.Tpet_1315"/>
<dbReference type="KEGG" id="tpt:Tpet_1315"/>
<dbReference type="eggNOG" id="COG0361">
    <property type="taxonomic scope" value="Bacteria"/>
</dbReference>
<dbReference type="HOGENOM" id="CLU_151267_1_0_0"/>
<dbReference type="Proteomes" id="UP000006558">
    <property type="component" value="Chromosome"/>
</dbReference>
<dbReference type="GO" id="GO:0005829">
    <property type="term" value="C:cytosol"/>
    <property type="evidence" value="ECO:0007669"/>
    <property type="project" value="TreeGrafter"/>
</dbReference>
<dbReference type="GO" id="GO:0043022">
    <property type="term" value="F:ribosome binding"/>
    <property type="evidence" value="ECO:0007669"/>
    <property type="project" value="UniProtKB-UniRule"/>
</dbReference>
<dbReference type="GO" id="GO:0019843">
    <property type="term" value="F:rRNA binding"/>
    <property type="evidence" value="ECO:0007669"/>
    <property type="project" value="UniProtKB-UniRule"/>
</dbReference>
<dbReference type="GO" id="GO:0003743">
    <property type="term" value="F:translation initiation factor activity"/>
    <property type="evidence" value="ECO:0007669"/>
    <property type="project" value="UniProtKB-UniRule"/>
</dbReference>
<dbReference type="CDD" id="cd04451">
    <property type="entry name" value="S1_IF1"/>
    <property type="match status" value="1"/>
</dbReference>
<dbReference type="FunFam" id="2.40.50.140:FF:000002">
    <property type="entry name" value="Translation initiation factor IF-1"/>
    <property type="match status" value="1"/>
</dbReference>
<dbReference type="Gene3D" id="2.40.50.140">
    <property type="entry name" value="Nucleic acid-binding proteins"/>
    <property type="match status" value="1"/>
</dbReference>
<dbReference type="HAMAP" id="MF_00075">
    <property type="entry name" value="IF_1"/>
    <property type="match status" value="1"/>
</dbReference>
<dbReference type="InterPro" id="IPR012340">
    <property type="entry name" value="NA-bd_OB-fold"/>
</dbReference>
<dbReference type="InterPro" id="IPR006196">
    <property type="entry name" value="RNA-binding_domain_S1_IF1"/>
</dbReference>
<dbReference type="InterPro" id="IPR003029">
    <property type="entry name" value="S1_domain"/>
</dbReference>
<dbReference type="InterPro" id="IPR004368">
    <property type="entry name" value="TIF_IF1"/>
</dbReference>
<dbReference type="NCBIfam" id="TIGR00008">
    <property type="entry name" value="infA"/>
    <property type="match status" value="1"/>
</dbReference>
<dbReference type="PANTHER" id="PTHR33370">
    <property type="entry name" value="TRANSLATION INITIATION FACTOR IF-1, CHLOROPLASTIC"/>
    <property type="match status" value="1"/>
</dbReference>
<dbReference type="PANTHER" id="PTHR33370:SF1">
    <property type="entry name" value="TRANSLATION INITIATION FACTOR IF-1, CHLOROPLASTIC"/>
    <property type="match status" value="1"/>
</dbReference>
<dbReference type="Pfam" id="PF01176">
    <property type="entry name" value="eIF-1a"/>
    <property type="match status" value="1"/>
</dbReference>
<dbReference type="SMART" id="SM00316">
    <property type="entry name" value="S1"/>
    <property type="match status" value="1"/>
</dbReference>
<dbReference type="SUPFAM" id="SSF50249">
    <property type="entry name" value="Nucleic acid-binding proteins"/>
    <property type="match status" value="1"/>
</dbReference>
<dbReference type="PROSITE" id="PS50832">
    <property type="entry name" value="S1_IF1_TYPE"/>
    <property type="match status" value="1"/>
</dbReference>
<comment type="function">
    <text evidence="1">One of the essential components for the initiation of protein synthesis. Stabilizes the binding of IF-2 and IF-3 on the 30S subunit to which N-formylmethionyl-tRNA(fMet) subsequently binds. Helps modulate mRNA selection, yielding the 30S pre-initiation complex (PIC). Upon addition of the 50S ribosomal subunit IF-1, IF-2 and IF-3 are released leaving the mature 70S translation initiation complex.</text>
</comment>
<comment type="subunit">
    <text evidence="1">Component of the 30S ribosomal translation pre-initiation complex which assembles on the 30S ribosome in the order IF-2 and IF-3, IF-1 and N-formylmethionyl-tRNA(fMet); mRNA recruitment can occur at any time during PIC assembly.</text>
</comment>
<comment type="subcellular location">
    <subcellularLocation>
        <location evidence="1">Cytoplasm</location>
    </subcellularLocation>
</comment>
<comment type="similarity">
    <text evidence="1">Belongs to the IF-1 family.</text>
</comment>